<comment type="function">
    <text evidence="1">Is involved in L-lactate degradation and allows cells to grow with lactate as the sole carbon source.</text>
</comment>
<comment type="similarity">
    <text evidence="1">Belongs to the LutA/YkgE family.</text>
</comment>
<dbReference type="EMBL" id="AE017194">
    <property type="protein sequence ID" value="AAS40345.1"/>
    <property type="molecule type" value="Genomic_DNA"/>
</dbReference>
<dbReference type="SMR" id="Q73BK2"/>
<dbReference type="KEGG" id="bca:BCE_1416"/>
<dbReference type="HOGENOM" id="CLU_023081_1_0_9"/>
<dbReference type="Proteomes" id="UP000002527">
    <property type="component" value="Chromosome"/>
</dbReference>
<dbReference type="GO" id="GO:0005829">
    <property type="term" value="C:cytosol"/>
    <property type="evidence" value="ECO:0007669"/>
    <property type="project" value="TreeGrafter"/>
</dbReference>
<dbReference type="GO" id="GO:0016491">
    <property type="term" value="F:oxidoreductase activity"/>
    <property type="evidence" value="ECO:0007669"/>
    <property type="project" value="UniProtKB-ARBA"/>
</dbReference>
<dbReference type="GO" id="GO:0006089">
    <property type="term" value="P:lactate metabolic process"/>
    <property type="evidence" value="ECO:0007669"/>
    <property type="project" value="UniProtKB-UniRule"/>
</dbReference>
<dbReference type="HAMAP" id="MF_02105">
    <property type="entry name" value="LutA"/>
    <property type="match status" value="1"/>
</dbReference>
<dbReference type="InterPro" id="IPR004017">
    <property type="entry name" value="Cys_rich_dom"/>
</dbReference>
<dbReference type="InterPro" id="IPR022822">
    <property type="entry name" value="LutA"/>
</dbReference>
<dbReference type="PANTHER" id="PTHR30296:SF0">
    <property type="entry name" value="LACTATE UTILIZATION PROTEIN A"/>
    <property type="match status" value="1"/>
</dbReference>
<dbReference type="PANTHER" id="PTHR30296">
    <property type="entry name" value="UNCHARACTERIZED PROTEIN YKGE"/>
    <property type="match status" value="1"/>
</dbReference>
<dbReference type="Pfam" id="PF02754">
    <property type="entry name" value="CCG"/>
    <property type="match status" value="2"/>
</dbReference>
<gene>
    <name evidence="1" type="primary">lutA</name>
    <name type="ordered locus">BCE_1416</name>
</gene>
<evidence type="ECO:0000255" key="1">
    <source>
        <dbReference type="HAMAP-Rule" id="MF_02105"/>
    </source>
</evidence>
<proteinExistence type="inferred from homology"/>
<accession>Q73BK2</accession>
<reference key="1">
    <citation type="journal article" date="2004" name="Nucleic Acids Res.">
        <title>The genome sequence of Bacillus cereus ATCC 10987 reveals metabolic adaptations and a large plasmid related to Bacillus anthracis pXO1.</title>
        <authorList>
            <person name="Rasko D.A."/>
            <person name="Ravel J."/>
            <person name="Oekstad O.A."/>
            <person name="Helgason E."/>
            <person name="Cer R.Z."/>
            <person name="Jiang L."/>
            <person name="Shores K.A."/>
            <person name="Fouts D.E."/>
            <person name="Tourasse N.J."/>
            <person name="Angiuoli S.V."/>
            <person name="Kolonay J.F."/>
            <person name="Nelson W.C."/>
            <person name="Kolstoe A.-B."/>
            <person name="Fraser C.M."/>
            <person name="Read T.D."/>
        </authorList>
    </citation>
    <scope>NUCLEOTIDE SEQUENCE [LARGE SCALE GENOMIC DNA]</scope>
    <source>
        <strain>ATCC 10987 / NRS 248</strain>
    </source>
</reference>
<name>LUTA_BACC1</name>
<sequence>MKVTLFVTCLVDMFETNVGKATVEVLERLGCEIEFPEAQVCCGQPAYNSGHVEAAKEAMKHMIETFEDAEYIVTPSGSCATMFHEYPHVFKDDPKWAKRAQKVADKTYEFTQFIVDVLKVTDVGASLPGIATIHKSCHMTRMLGVTEAPGILLSNVKGLTVRELPNVQNCCGFGGTFSVKMTPISEQMVDEKVDSAMETGADYLIGADCGCLLNIGGRIERLGKEIKVMHIAEVLNSRS</sequence>
<protein>
    <recommendedName>
        <fullName evidence="1">Lactate utilization protein A</fullName>
    </recommendedName>
</protein>
<organism>
    <name type="scientific">Bacillus cereus (strain ATCC 10987 / NRS 248)</name>
    <dbReference type="NCBI Taxonomy" id="222523"/>
    <lineage>
        <taxon>Bacteria</taxon>
        <taxon>Bacillati</taxon>
        <taxon>Bacillota</taxon>
        <taxon>Bacilli</taxon>
        <taxon>Bacillales</taxon>
        <taxon>Bacillaceae</taxon>
        <taxon>Bacillus</taxon>
        <taxon>Bacillus cereus group</taxon>
    </lineage>
</organism>
<feature type="chain" id="PRO_0000384027" description="Lactate utilization protein A">
    <location>
        <begin position="1"/>
        <end position="239"/>
    </location>
</feature>